<evidence type="ECO:0000250" key="1"/>
<evidence type="ECO:0000255" key="2">
    <source>
        <dbReference type="PROSITE-ProRule" id="PRU01082"/>
    </source>
</evidence>
<evidence type="ECO:0000305" key="3"/>
<evidence type="ECO:0000312" key="4">
    <source>
        <dbReference type="EMBL" id="ABA92329.1"/>
    </source>
</evidence>
<evidence type="ECO:0000312" key="5">
    <source>
        <dbReference type="EMBL" id="BAH95181.1"/>
    </source>
</evidence>
<evidence type="ECO:0000312" key="6">
    <source>
        <dbReference type="EMBL" id="EEE51902.1"/>
    </source>
</evidence>
<comment type="catalytic activity">
    <reaction>
        <text>O-phospho-L-seryl-[protein] + H2O = L-seryl-[protein] + phosphate</text>
        <dbReference type="Rhea" id="RHEA:20629"/>
        <dbReference type="Rhea" id="RHEA-COMP:9863"/>
        <dbReference type="Rhea" id="RHEA-COMP:11604"/>
        <dbReference type="ChEBI" id="CHEBI:15377"/>
        <dbReference type="ChEBI" id="CHEBI:29999"/>
        <dbReference type="ChEBI" id="CHEBI:43474"/>
        <dbReference type="ChEBI" id="CHEBI:83421"/>
        <dbReference type="EC" id="3.1.3.16"/>
    </reaction>
</comment>
<comment type="catalytic activity">
    <reaction>
        <text>O-phospho-L-threonyl-[protein] + H2O = L-threonyl-[protein] + phosphate</text>
        <dbReference type="Rhea" id="RHEA:47004"/>
        <dbReference type="Rhea" id="RHEA-COMP:11060"/>
        <dbReference type="Rhea" id="RHEA-COMP:11605"/>
        <dbReference type="ChEBI" id="CHEBI:15377"/>
        <dbReference type="ChEBI" id="CHEBI:30013"/>
        <dbReference type="ChEBI" id="CHEBI:43474"/>
        <dbReference type="ChEBI" id="CHEBI:61977"/>
        <dbReference type="EC" id="3.1.3.16"/>
    </reaction>
</comment>
<comment type="cofactor">
    <cofactor evidence="1">
        <name>Mg(2+)</name>
        <dbReference type="ChEBI" id="CHEBI:18420"/>
    </cofactor>
    <cofactor evidence="1">
        <name>Mn(2+)</name>
        <dbReference type="ChEBI" id="CHEBI:29035"/>
    </cofactor>
    <text evidence="1">Binds 2 magnesium or manganese ions per subunit.</text>
</comment>
<comment type="similarity">
    <text evidence="3">Belongs to the PP2C family.</text>
</comment>
<accession>Q53Q11</accession>
<accession>B9GA46</accession>
<reference key="1">
    <citation type="journal article" date="2005" name="BMC Biol.">
        <title>The sequence of rice chromosomes 11 and 12, rich in disease resistance genes and recent gene duplications.</title>
        <authorList>
            <consortium name="The rice chromosomes 11 and 12 sequencing consortia"/>
        </authorList>
    </citation>
    <scope>NUCLEOTIDE SEQUENCE [LARGE SCALE GENOMIC DNA]</scope>
    <source>
        <strain>cv. Nipponbare</strain>
    </source>
</reference>
<reference key="2">
    <citation type="journal article" date="2005" name="Nature">
        <title>The map-based sequence of the rice genome.</title>
        <authorList>
            <consortium name="International rice genome sequencing project (IRGSP)"/>
        </authorList>
    </citation>
    <scope>NUCLEOTIDE SEQUENCE [LARGE SCALE GENOMIC DNA]</scope>
    <source>
        <strain>cv. Nipponbare</strain>
    </source>
</reference>
<reference key="3">
    <citation type="journal article" date="2008" name="Nucleic Acids Res.">
        <title>The rice annotation project database (RAP-DB): 2008 update.</title>
        <authorList>
            <consortium name="The rice annotation project (RAP)"/>
        </authorList>
    </citation>
    <scope>GENOME REANNOTATION</scope>
    <source>
        <strain>cv. Nipponbare</strain>
    </source>
</reference>
<reference key="4">
    <citation type="journal article" date="2013" name="Rice">
        <title>Improvement of the Oryza sativa Nipponbare reference genome using next generation sequence and optical map data.</title>
        <authorList>
            <person name="Kawahara Y."/>
            <person name="de la Bastide M."/>
            <person name="Hamilton J.P."/>
            <person name="Kanamori H."/>
            <person name="McCombie W.R."/>
            <person name="Ouyang S."/>
            <person name="Schwartz D.C."/>
            <person name="Tanaka T."/>
            <person name="Wu J."/>
            <person name="Zhou S."/>
            <person name="Childs K.L."/>
            <person name="Davidson R.M."/>
            <person name="Lin H."/>
            <person name="Quesada-Ocampo L."/>
            <person name="Vaillancourt B."/>
            <person name="Sakai H."/>
            <person name="Lee S.S."/>
            <person name="Kim J."/>
            <person name="Numa H."/>
            <person name="Itoh T."/>
            <person name="Buell C.R."/>
            <person name="Matsumoto T."/>
        </authorList>
    </citation>
    <scope>GENOME REANNOTATION</scope>
    <source>
        <strain>cv. Nipponbare</strain>
    </source>
</reference>
<reference key="5">
    <citation type="journal article" date="2005" name="PLoS Biol.">
        <title>The genomes of Oryza sativa: a history of duplications.</title>
        <authorList>
            <person name="Yu J."/>
            <person name="Wang J."/>
            <person name="Lin W."/>
            <person name="Li S."/>
            <person name="Li H."/>
            <person name="Zhou J."/>
            <person name="Ni P."/>
            <person name="Dong W."/>
            <person name="Hu S."/>
            <person name="Zeng C."/>
            <person name="Zhang J."/>
            <person name="Zhang Y."/>
            <person name="Li R."/>
            <person name="Xu Z."/>
            <person name="Li S."/>
            <person name="Li X."/>
            <person name="Zheng H."/>
            <person name="Cong L."/>
            <person name="Lin L."/>
            <person name="Yin J."/>
            <person name="Geng J."/>
            <person name="Li G."/>
            <person name="Shi J."/>
            <person name="Liu J."/>
            <person name="Lv H."/>
            <person name="Li J."/>
            <person name="Wang J."/>
            <person name="Deng Y."/>
            <person name="Ran L."/>
            <person name="Shi X."/>
            <person name="Wang X."/>
            <person name="Wu Q."/>
            <person name="Li C."/>
            <person name="Ren X."/>
            <person name="Wang J."/>
            <person name="Wang X."/>
            <person name="Li D."/>
            <person name="Liu D."/>
            <person name="Zhang X."/>
            <person name="Ji Z."/>
            <person name="Zhao W."/>
            <person name="Sun Y."/>
            <person name="Zhang Z."/>
            <person name="Bao J."/>
            <person name="Han Y."/>
            <person name="Dong L."/>
            <person name="Ji J."/>
            <person name="Chen P."/>
            <person name="Wu S."/>
            <person name="Liu J."/>
            <person name="Xiao Y."/>
            <person name="Bu D."/>
            <person name="Tan J."/>
            <person name="Yang L."/>
            <person name="Ye C."/>
            <person name="Zhang J."/>
            <person name="Xu J."/>
            <person name="Zhou Y."/>
            <person name="Yu Y."/>
            <person name="Zhang B."/>
            <person name="Zhuang S."/>
            <person name="Wei H."/>
            <person name="Liu B."/>
            <person name="Lei M."/>
            <person name="Yu H."/>
            <person name="Li Y."/>
            <person name="Xu H."/>
            <person name="Wei S."/>
            <person name="He X."/>
            <person name="Fang L."/>
            <person name="Zhang Z."/>
            <person name="Zhang Y."/>
            <person name="Huang X."/>
            <person name="Su Z."/>
            <person name="Tong W."/>
            <person name="Li J."/>
            <person name="Tong Z."/>
            <person name="Li S."/>
            <person name="Ye J."/>
            <person name="Wang L."/>
            <person name="Fang L."/>
            <person name="Lei T."/>
            <person name="Chen C.-S."/>
            <person name="Chen H.-C."/>
            <person name="Xu Z."/>
            <person name="Li H."/>
            <person name="Huang H."/>
            <person name="Zhang F."/>
            <person name="Xu H."/>
            <person name="Li N."/>
            <person name="Zhao C."/>
            <person name="Li S."/>
            <person name="Dong L."/>
            <person name="Huang Y."/>
            <person name="Li L."/>
            <person name="Xi Y."/>
            <person name="Qi Q."/>
            <person name="Li W."/>
            <person name="Zhang B."/>
            <person name="Hu W."/>
            <person name="Zhang Y."/>
            <person name="Tian X."/>
            <person name="Jiao Y."/>
            <person name="Liang X."/>
            <person name="Jin J."/>
            <person name="Gao L."/>
            <person name="Zheng W."/>
            <person name="Hao B."/>
            <person name="Liu S.-M."/>
            <person name="Wang W."/>
            <person name="Yuan L."/>
            <person name="Cao M."/>
            <person name="McDermott J."/>
            <person name="Samudrala R."/>
            <person name="Wang J."/>
            <person name="Wong G.K.-S."/>
            <person name="Yang H."/>
        </authorList>
    </citation>
    <scope>NUCLEOTIDE SEQUENCE [LARGE SCALE GENOMIC DNA]</scope>
    <source>
        <strain>cv. Nipponbare</strain>
    </source>
</reference>
<reference key="6">
    <citation type="journal article" date="2008" name="BMC Genomics">
        <title>Genome-wide and expression analysis of protein phosphatase 2C in rice and Arabidopsis.</title>
        <authorList>
            <person name="Xue T."/>
            <person name="Wang D."/>
            <person name="Zhang S."/>
            <person name="Ehlting J."/>
            <person name="Ni F."/>
            <person name="Jacab S."/>
            <person name="Zheng C."/>
            <person name="Zhong Y."/>
        </authorList>
    </citation>
    <scope>GENE FAMILY</scope>
    <scope>NOMENCLATURE</scope>
</reference>
<protein>
    <recommendedName>
        <fullName>Probable protein phosphatase 2C 74</fullName>
        <shortName>OsPP2C74</shortName>
        <ecNumber>3.1.3.16</ecNumber>
    </recommendedName>
</protein>
<feature type="chain" id="PRO_0000363321" description="Probable protein phosphatase 2C 74">
    <location>
        <begin position="1"/>
        <end position="397"/>
    </location>
</feature>
<feature type="domain" description="PPM-type phosphatase" evidence="2">
    <location>
        <begin position="133"/>
        <end position="391"/>
    </location>
</feature>
<feature type="binding site" evidence="1">
    <location>
        <position position="170"/>
    </location>
    <ligand>
        <name>Mn(2+)</name>
        <dbReference type="ChEBI" id="CHEBI:29035"/>
        <label>1</label>
    </ligand>
</feature>
<feature type="binding site" evidence="1">
    <location>
        <position position="170"/>
    </location>
    <ligand>
        <name>Mn(2+)</name>
        <dbReference type="ChEBI" id="CHEBI:29035"/>
        <label>2</label>
    </ligand>
</feature>
<feature type="binding site" evidence="1">
    <location>
        <position position="171"/>
    </location>
    <ligand>
        <name>Mn(2+)</name>
        <dbReference type="ChEBI" id="CHEBI:29035"/>
        <label>1</label>
    </ligand>
</feature>
<feature type="binding site" evidence="1">
    <location>
        <position position="343"/>
    </location>
    <ligand>
        <name>Mn(2+)</name>
        <dbReference type="ChEBI" id="CHEBI:29035"/>
        <label>2</label>
    </ligand>
</feature>
<feature type="binding site" evidence="1">
    <location>
        <position position="382"/>
    </location>
    <ligand>
        <name>Mn(2+)</name>
        <dbReference type="ChEBI" id="CHEBI:29035"/>
        <label>2</label>
    </ligand>
</feature>
<gene>
    <name evidence="5" type="ordered locus">Os11g0242200</name>
    <name evidence="4" type="ordered locus">LOC_Os11g13820</name>
    <name evidence="6" type="ORF">OsJ_33495</name>
</gene>
<sequence length="397" mass="41352">MACMLCCSPLPALSSPATGGAAVVGFSSSSRRKAAHVHPAVAVKDHDLSSSSPAACGDEGGGAVVIEEEAHPSMMMSVAAPAMKKKAVAARWRPPRLVVPAVAGADEAMAAAAAVKAAKEKEEEEAMEVEGEGFWVASRRGLRHAMEDGYGVITHKIEGHSQMAFYGVYDGHGGRAAVDFVAGRLGNNVVAAAEKQRLSEKASSPAAADHVAAAIRAAYLATDSEFLSQGTRGGACAATALVIDGDLYVANLGDCRAVISRHGAAAALTSDHTPARDDERSRIESSGGYVSCGSNGVWRVQDCLAVTRSFGDGGLKRWVVAEPEVSRTPLAGAGCEFLVIASDGLWNKVSNQEAVDAVAAGHYSVDSCRRLVDMARRRGSRDDVTVMVVDLKRFLNC</sequence>
<proteinExistence type="inferred from homology"/>
<keyword id="KW-0378">Hydrolase</keyword>
<keyword id="KW-0460">Magnesium</keyword>
<keyword id="KW-0464">Manganese</keyword>
<keyword id="KW-0479">Metal-binding</keyword>
<keyword id="KW-0904">Protein phosphatase</keyword>
<keyword id="KW-1185">Reference proteome</keyword>
<name>P2C74_ORYSJ</name>
<organism>
    <name type="scientific">Oryza sativa subsp. japonica</name>
    <name type="common">Rice</name>
    <dbReference type="NCBI Taxonomy" id="39947"/>
    <lineage>
        <taxon>Eukaryota</taxon>
        <taxon>Viridiplantae</taxon>
        <taxon>Streptophyta</taxon>
        <taxon>Embryophyta</taxon>
        <taxon>Tracheophyta</taxon>
        <taxon>Spermatophyta</taxon>
        <taxon>Magnoliopsida</taxon>
        <taxon>Liliopsida</taxon>
        <taxon>Poales</taxon>
        <taxon>Poaceae</taxon>
        <taxon>BOP clade</taxon>
        <taxon>Oryzoideae</taxon>
        <taxon>Oryzeae</taxon>
        <taxon>Oryzinae</taxon>
        <taxon>Oryza</taxon>
        <taxon>Oryza sativa</taxon>
    </lineage>
</organism>
<dbReference type="EC" id="3.1.3.16"/>
<dbReference type="EMBL" id="AC119671">
    <property type="protein sequence ID" value="AAX95399.1"/>
    <property type="molecule type" value="Genomic_DNA"/>
</dbReference>
<dbReference type="EMBL" id="DP000010">
    <property type="protein sequence ID" value="ABA92329.1"/>
    <property type="molecule type" value="Genomic_DNA"/>
</dbReference>
<dbReference type="EMBL" id="AP008217">
    <property type="protein sequence ID" value="BAH95181.1"/>
    <property type="molecule type" value="Genomic_DNA"/>
</dbReference>
<dbReference type="EMBL" id="AP014967">
    <property type="status" value="NOT_ANNOTATED_CDS"/>
    <property type="molecule type" value="Genomic_DNA"/>
</dbReference>
<dbReference type="EMBL" id="CM000148">
    <property type="protein sequence ID" value="EEE51902.1"/>
    <property type="molecule type" value="Genomic_DNA"/>
</dbReference>
<dbReference type="SMR" id="Q53Q11"/>
<dbReference type="FunCoup" id="Q53Q11">
    <property type="interactions" value="10"/>
</dbReference>
<dbReference type="STRING" id="39947.Q53Q11"/>
<dbReference type="PaxDb" id="39947-Q53Q11"/>
<dbReference type="KEGG" id="dosa:Os11g0242200"/>
<dbReference type="InParanoid" id="Q53Q11"/>
<dbReference type="Proteomes" id="UP000000763">
    <property type="component" value="Chromosome 11"/>
</dbReference>
<dbReference type="Proteomes" id="UP000007752">
    <property type="component" value="Chromosome 11"/>
</dbReference>
<dbReference type="Proteomes" id="UP000059680">
    <property type="component" value="Chromosome 11"/>
</dbReference>
<dbReference type="GO" id="GO:0046872">
    <property type="term" value="F:metal ion binding"/>
    <property type="evidence" value="ECO:0007669"/>
    <property type="project" value="UniProtKB-KW"/>
</dbReference>
<dbReference type="GO" id="GO:0004722">
    <property type="term" value="F:protein serine/threonine phosphatase activity"/>
    <property type="evidence" value="ECO:0007669"/>
    <property type="project" value="UniProtKB-EC"/>
</dbReference>
<dbReference type="GO" id="GO:0007165">
    <property type="term" value="P:signal transduction"/>
    <property type="evidence" value="ECO:0000318"/>
    <property type="project" value="GO_Central"/>
</dbReference>
<dbReference type="CDD" id="cd00143">
    <property type="entry name" value="PP2Cc"/>
    <property type="match status" value="1"/>
</dbReference>
<dbReference type="FunFam" id="3.60.40.10:FF:000079">
    <property type="entry name" value="Probable protein phosphatase 2C 74"/>
    <property type="match status" value="1"/>
</dbReference>
<dbReference type="Gene3D" id="3.60.40.10">
    <property type="entry name" value="PPM-type phosphatase domain"/>
    <property type="match status" value="1"/>
</dbReference>
<dbReference type="InterPro" id="IPR015655">
    <property type="entry name" value="PP2C"/>
</dbReference>
<dbReference type="InterPro" id="IPR000222">
    <property type="entry name" value="PP2C_BS"/>
</dbReference>
<dbReference type="InterPro" id="IPR036457">
    <property type="entry name" value="PPM-type-like_dom_sf"/>
</dbReference>
<dbReference type="InterPro" id="IPR001932">
    <property type="entry name" value="PPM-type_phosphatase-like_dom"/>
</dbReference>
<dbReference type="PANTHER" id="PTHR47992">
    <property type="entry name" value="PROTEIN PHOSPHATASE"/>
    <property type="match status" value="1"/>
</dbReference>
<dbReference type="Pfam" id="PF00481">
    <property type="entry name" value="PP2C"/>
    <property type="match status" value="1"/>
</dbReference>
<dbReference type="SMART" id="SM00332">
    <property type="entry name" value="PP2Cc"/>
    <property type="match status" value="1"/>
</dbReference>
<dbReference type="SUPFAM" id="SSF81606">
    <property type="entry name" value="PP2C-like"/>
    <property type="match status" value="1"/>
</dbReference>
<dbReference type="PROSITE" id="PS01032">
    <property type="entry name" value="PPM_1"/>
    <property type="match status" value="1"/>
</dbReference>
<dbReference type="PROSITE" id="PS51746">
    <property type="entry name" value="PPM_2"/>
    <property type="match status" value="1"/>
</dbReference>